<reference key="1">
    <citation type="journal article" date="2008" name="PLoS ONE">
        <title>Genome sequence of Brucella abortus vaccine strain S19 compared to virulent strains yields candidate virulence genes.</title>
        <authorList>
            <person name="Crasta O.R."/>
            <person name="Folkerts O."/>
            <person name="Fei Z."/>
            <person name="Mane S.P."/>
            <person name="Evans C."/>
            <person name="Martino-Catt S."/>
            <person name="Bricker B."/>
            <person name="Yu G."/>
            <person name="Du L."/>
            <person name="Sobral B.W."/>
        </authorList>
    </citation>
    <scope>NUCLEOTIDE SEQUENCE [LARGE SCALE GENOMIC DNA]</scope>
    <source>
        <strain>S19</strain>
    </source>
</reference>
<sequence>MRAGQPKITGAKITGAIIAGGQSSRMQAGGVSGDKFLQPLGSAPVIAHVIARLQPQVDTLFINSKGDLSRFAAFGLPAVKDIAMNHGGPLVGLLTCLAHASPCRLLLTSAADTPFLPCDLASNLIRKQAETGARIILACSNERVHPIVGLWHTDLVPDLEKWLQHAEKASIFWFAKHIGFEVVNIPLAHAPRLAESYDPFFNINLPDDLLKAREINEALQA</sequence>
<feature type="chain" id="PRO_1000115793" description="Molybdenum cofactor guanylyltransferase">
    <location>
        <begin position="1"/>
        <end position="221"/>
    </location>
</feature>
<feature type="binding site" evidence="1">
    <location>
        <begin position="18"/>
        <end position="20"/>
    </location>
    <ligand>
        <name>GTP</name>
        <dbReference type="ChEBI" id="CHEBI:37565"/>
    </ligand>
</feature>
<feature type="binding site" evidence="1">
    <location>
        <position position="35"/>
    </location>
    <ligand>
        <name>GTP</name>
        <dbReference type="ChEBI" id="CHEBI:37565"/>
    </ligand>
</feature>
<feature type="binding site" evidence="1">
    <location>
        <position position="63"/>
    </location>
    <ligand>
        <name>GTP</name>
        <dbReference type="ChEBI" id="CHEBI:37565"/>
    </ligand>
</feature>
<feature type="binding site" evidence="1">
    <location>
        <position position="81"/>
    </location>
    <ligand>
        <name>GTP</name>
        <dbReference type="ChEBI" id="CHEBI:37565"/>
    </ligand>
</feature>
<feature type="binding site" evidence="1">
    <location>
        <position position="112"/>
    </location>
    <ligand>
        <name>GTP</name>
        <dbReference type="ChEBI" id="CHEBI:37565"/>
    </ligand>
</feature>
<feature type="binding site" evidence="1">
    <location>
        <position position="112"/>
    </location>
    <ligand>
        <name>Mg(2+)</name>
        <dbReference type="ChEBI" id="CHEBI:18420"/>
    </ligand>
</feature>
<evidence type="ECO:0000255" key="1">
    <source>
        <dbReference type="HAMAP-Rule" id="MF_00316"/>
    </source>
</evidence>
<protein>
    <recommendedName>
        <fullName evidence="1">Molybdenum cofactor guanylyltransferase</fullName>
        <shortName evidence="1">MoCo guanylyltransferase</shortName>
        <ecNumber evidence="1">2.7.7.77</ecNumber>
    </recommendedName>
    <alternativeName>
        <fullName evidence="1">GTP:molybdopterin guanylyltransferase</fullName>
    </alternativeName>
    <alternativeName>
        <fullName evidence="1">Mo-MPT guanylyltransferase</fullName>
    </alternativeName>
    <alternativeName>
        <fullName evidence="1">Molybdopterin guanylyltransferase</fullName>
    </alternativeName>
    <alternativeName>
        <fullName evidence="1">Molybdopterin-guanine dinucleotide synthase</fullName>
        <shortName evidence="1">MGD synthase</shortName>
    </alternativeName>
</protein>
<proteinExistence type="inferred from homology"/>
<name>MOBA_BRUA1</name>
<gene>
    <name evidence="1" type="primary">mobA</name>
    <name type="ordered locus">BAbS19_I09080</name>
</gene>
<comment type="function">
    <text evidence="1">Transfers a GMP moiety from GTP to Mo-molybdopterin (Mo-MPT) cofactor (Moco or molybdenum cofactor) to form Mo-molybdopterin guanine dinucleotide (Mo-MGD) cofactor.</text>
</comment>
<comment type="catalytic activity">
    <reaction evidence="1">
        <text>Mo-molybdopterin + GTP + H(+) = Mo-molybdopterin guanine dinucleotide + diphosphate</text>
        <dbReference type="Rhea" id="RHEA:34243"/>
        <dbReference type="ChEBI" id="CHEBI:15378"/>
        <dbReference type="ChEBI" id="CHEBI:33019"/>
        <dbReference type="ChEBI" id="CHEBI:37565"/>
        <dbReference type="ChEBI" id="CHEBI:71302"/>
        <dbReference type="ChEBI" id="CHEBI:71310"/>
        <dbReference type="EC" id="2.7.7.77"/>
    </reaction>
</comment>
<comment type="cofactor">
    <cofactor evidence="1">
        <name>Mg(2+)</name>
        <dbReference type="ChEBI" id="CHEBI:18420"/>
    </cofactor>
</comment>
<comment type="subunit">
    <text evidence="1">Monomer.</text>
</comment>
<comment type="subcellular location">
    <subcellularLocation>
        <location evidence="1">Cytoplasm</location>
    </subcellularLocation>
</comment>
<comment type="domain">
    <text evidence="1">The N-terminal domain determines nucleotide recognition and specific binding, while the C-terminal domain determines the specific binding to the target protein.</text>
</comment>
<comment type="similarity">
    <text evidence="1">Belongs to the MobA family.</text>
</comment>
<dbReference type="EC" id="2.7.7.77" evidence="1"/>
<dbReference type="EMBL" id="CP000887">
    <property type="protein sequence ID" value="ACD72427.1"/>
    <property type="molecule type" value="Genomic_DNA"/>
</dbReference>
<dbReference type="RefSeq" id="WP_002964077.1">
    <property type="nucleotide sequence ID" value="NC_010742.1"/>
</dbReference>
<dbReference type="SMR" id="B2S5I0"/>
<dbReference type="KEGG" id="bmc:BAbS19_I09080"/>
<dbReference type="HOGENOM" id="CLU_055597_5_0_5"/>
<dbReference type="Proteomes" id="UP000002565">
    <property type="component" value="Chromosome 1"/>
</dbReference>
<dbReference type="GO" id="GO:0005737">
    <property type="term" value="C:cytoplasm"/>
    <property type="evidence" value="ECO:0007669"/>
    <property type="project" value="UniProtKB-SubCell"/>
</dbReference>
<dbReference type="GO" id="GO:0005525">
    <property type="term" value="F:GTP binding"/>
    <property type="evidence" value="ECO:0007669"/>
    <property type="project" value="UniProtKB-UniRule"/>
</dbReference>
<dbReference type="GO" id="GO:0046872">
    <property type="term" value="F:metal ion binding"/>
    <property type="evidence" value="ECO:0007669"/>
    <property type="project" value="UniProtKB-KW"/>
</dbReference>
<dbReference type="GO" id="GO:0061603">
    <property type="term" value="F:molybdenum cofactor guanylyltransferase activity"/>
    <property type="evidence" value="ECO:0007669"/>
    <property type="project" value="UniProtKB-EC"/>
</dbReference>
<dbReference type="GO" id="GO:1902758">
    <property type="term" value="P:bis(molybdopterin guanine dinucleotide)molybdenum biosynthetic process"/>
    <property type="evidence" value="ECO:0007669"/>
    <property type="project" value="TreeGrafter"/>
</dbReference>
<dbReference type="CDD" id="cd02503">
    <property type="entry name" value="MobA"/>
    <property type="match status" value="1"/>
</dbReference>
<dbReference type="Gene3D" id="3.90.550.10">
    <property type="entry name" value="Spore Coat Polysaccharide Biosynthesis Protein SpsA, Chain A"/>
    <property type="match status" value="1"/>
</dbReference>
<dbReference type="HAMAP" id="MF_00316">
    <property type="entry name" value="MobA"/>
    <property type="match status" value="1"/>
</dbReference>
<dbReference type="InterPro" id="IPR025877">
    <property type="entry name" value="MobA-like_NTP_Trfase"/>
</dbReference>
<dbReference type="InterPro" id="IPR013482">
    <property type="entry name" value="Molybde_CF_guanTrfase"/>
</dbReference>
<dbReference type="InterPro" id="IPR029044">
    <property type="entry name" value="Nucleotide-diphossugar_trans"/>
</dbReference>
<dbReference type="PANTHER" id="PTHR19136">
    <property type="entry name" value="MOLYBDENUM COFACTOR GUANYLYLTRANSFERASE"/>
    <property type="match status" value="1"/>
</dbReference>
<dbReference type="PANTHER" id="PTHR19136:SF81">
    <property type="entry name" value="MOLYBDENUM COFACTOR GUANYLYLTRANSFERASE"/>
    <property type="match status" value="1"/>
</dbReference>
<dbReference type="Pfam" id="PF12804">
    <property type="entry name" value="NTP_transf_3"/>
    <property type="match status" value="1"/>
</dbReference>
<dbReference type="SUPFAM" id="SSF53448">
    <property type="entry name" value="Nucleotide-diphospho-sugar transferases"/>
    <property type="match status" value="1"/>
</dbReference>
<keyword id="KW-0963">Cytoplasm</keyword>
<keyword id="KW-0342">GTP-binding</keyword>
<keyword id="KW-0460">Magnesium</keyword>
<keyword id="KW-0479">Metal-binding</keyword>
<keyword id="KW-0501">Molybdenum cofactor biosynthesis</keyword>
<keyword id="KW-0547">Nucleotide-binding</keyword>
<keyword id="KW-0808">Transferase</keyword>
<accession>B2S5I0</accession>
<organism>
    <name type="scientific">Brucella abortus (strain S19)</name>
    <dbReference type="NCBI Taxonomy" id="430066"/>
    <lineage>
        <taxon>Bacteria</taxon>
        <taxon>Pseudomonadati</taxon>
        <taxon>Pseudomonadota</taxon>
        <taxon>Alphaproteobacteria</taxon>
        <taxon>Hyphomicrobiales</taxon>
        <taxon>Brucellaceae</taxon>
        <taxon>Brucella/Ochrobactrum group</taxon>
        <taxon>Brucella</taxon>
    </lineage>
</organism>